<protein>
    <recommendedName>
        <fullName evidence="1">NAD kinase</fullName>
        <ecNumber evidence="1">2.7.1.23</ecNumber>
    </recommendedName>
    <alternativeName>
        <fullName evidence="1">ATP-dependent NAD kinase</fullName>
    </alternativeName>
</protein>
<proteinExistence type="inferred from homology"/>
<sequence>MLKIVSKPSFNRIALMGREGVEGVPETLAALKDYLVSLNREVILEENAAHMIDGSRLLTVPANDLKKKADLLIVVGGDGSLLNAAHIAVPQQLPVLGINRGRLGFLTDIPPNELTQISDILDGHYREEVRFLLEGTVEEGDEIVAQGIALNDIVLLPGNAPKMIEFDIFINDEFVCNQRADGLIITTPTGSTAYALSGGGPILHPQLNAMALVPMFPHTLSSRPIVVDAESQIKITISPENDVSPYVSNDGQERVSIKPGGNVYTRKYHYPLHLIHPTDYNYYDTLRRKLDWEKRAAKV</sequence>
<gene>
    <name evidence="1" type="primary">nadK</name>
    <name type="ordered locus">CBUD_1384</name>
</gene>
<evidence type="ECO:0000255" key="1">
    <source>
        <dbReference type="HAMAP-Rule" id="MF_00361"/>
    </source>
</evidence>
<name>NADK_COXBN</name>
<reference key="1">
    <citation type="journal article" date="2009" name="Infect. Immun.">
        <title>Comparative genomics reveal extensive transposon-mediated genomic plasticity and diversity among potential effector proteins within the genus Coxiella.</title>
        <authorList>
            <person name="Beare P.A."/>
            <person name="Unsworth N."/>
            <person name="Andoh M."/>
            <person name="Voth D.E."/>
            <person name="Omsland A."/>
            <person name="Gilk S.D."/>
            <person name="Williams K.P."/>
            <person name="Sobral B.W."/>
            <person name="Kupko J.J. III"/>
            <person name="Porcella S.F."/>
            <person name="Samuel J.E."/>
            <person name="Heinzen R.A."/>
        </authorList>
    </citation>
    <scope>NUCLEOTIDE SEQUENCE [LARGE SCALE GENOMIC DNA]</scope>
    <source>
        <strain>Dugway 5J108-111</strain>
    </source>
</reference>
<comment type="function">
    <text evidence="1">Involved in the regulation of the intracellular balance of NAD and NADP, and is a key enzyme in the biosynthesis of NADP. Catalyzes specifically the phosphorylation on 2'-hydroxyl of the adenosine moiety of NAD to yield NADP.</text>
</comment>
<comment type="catalytic activity">
    <reaction evidence="1">
        <text>NAD(+) + ATP = ADP + NADP(+) + H(+)</text>
        <dbReference type="Rhea" id="RHEA:18629"/>
        <dbReference type="ChEBI" id="CHEBI:15378"/>
        <dbReference type="ChEBI" id="CHEBI:30616"/>
        <dbReference type="ChEBI" id="CHEBI:57540"/>
        <dbReference type="ChEBI" id="CHEBI:58349"/>
        <dbReference type="ChEBI" id="CHEBI:456216"/>
        <dbReference type="EC" id="2.7.1.23"/>
    </reaction>
</comment>
<comment type="cofactor">
    <cofactor evidence="1">
        <name>a divalent metal cation</name>
        <dbReference type="ChEBI" id="CHEBI:60240"/>
    </cofactor>
</comment>
<comment type="subcellular location">
    <subcellularLocation>
        <location evidence="1">Cytoplasm</location>
    </subcellularLocation>
</comment>
<comment type="similarity">
    <text evidence="1">Belongs to the NAD kinase family.</text>
</comment>
<organism>
    <name type="scientific">Coxiella burnetii (strain Dugway 5J108-111)</name>
    <dbReference type="NCBI Taxonomy" id="434922"/>
    <lineage>
        <taxon>Bacteria</taxon>
        <taxon>Pseudomonadati</taxon>
        <taxon>Pseudomonadota</taxon>
        <taxon>Gammaproteobacteria</taxon>
        <taxon>Legionellales</taxon>
        <taxon>Coxiellaceae</taxon>
        <taxon>Coxiella</taxon>
    </lineage>
</organism>
<dbReference type="EC" id="2.7.1.23" evidence="1"/>
<dbReference type="EMBL" id="CP000733">
    <property type="protein sequence ID" value="ABS78008.1"/>
    <property type="molecule type" value="Genomic_DNA"/>
</dbReference>
<dbReference type="RefSeq" id="WP_005772537.1">
    <property type="nucleotide sequence ID" value="NC_009727.1"/>
</dbReference>
<dbReference type="SMR" id="A9KG94"/>
<dbReference type="KEGG" id="cbd:CBUD_1384"/>
<dbReference type="HOGENOM" id="CLU_008831_0_1_6"/>
<dbReference type="Proteomes" id="UP000008555">
    <property type="component" value="Chromosome"/>
</dbReference>
<dbReference type="GO" id="GO:0005737">
    <property type="term" value="C:cytoplasm"/>
    <property type="evidence" value="ECO:0007669"/>
    <property type="project" value="UniProtKB-SubCell"/>
</dbReference>
<dbReference type="GO" id="GO:0005524">
    <property type="term" value="F:ATP binding"/>
    <property type="evidence" value="ECO:0007669"/>
    <property type="project" value="UniProtKB-KW"/>
</dbReference>
<dbReference type="GO" id="GO:0046872">
    <property type="term" value="F:metal ion binding"/>
    <property type="evidence" value="ECO:0007669"/>
    <property type="project" value="UniProtKB-UniRule"/>
</dbReference>
<dbReference type="GO" id="GO:0051287">
    <property type="term" value="F:NAD binding"/>
    <property type="evidence" value="ECO:0007669"/>
    <property type="project" value="UniProtKB-ARBA"/>
</dbReference>
<dbReference type="GO" id="GO:0003951">
    <property type="term" value="F:NAD+ kinase activity"/>
    <property type="evidence" value="ECO:0007669"/>
    <property type="project" value="UniProtKB-UniRule"/>
</dbReference>
<dbReference type="GO" id="GO:0019674">
    <property type="term" value="P:NAD metabolic process"/>
    <property type="evidence" value="ECO:0007669"/>
    <property type="project" value="InterPro"/>
</dbReference>
<dbReference type="GO" id="GO:0006741">
    <property type="term" value="P:NADP biosynthetic process"/>
    <property type="evidence" value="ECO:0007669"/>
    <property type="project" value="UniProtKB-UniRule"/>
</dbReference>
<dbReference type="FunFam" id="2.60.200.30:FF:000009">
    <property type="entry name" value="Poly(P)/ATP NAD kinase"/>
    <property type="match status" value="1"/>
</dbReference>
<dbReference type="Gene3D" id="3.40.50.10330">
    <property type="entry name" value="Probable inorganic polyphosphate/atp-NAD kinase, domain 1"/>
    <property type="match status" value="1"/>
</dbReference>
<dbReference type="Gene3D" id="2.60.200.30">
    <property type="entry name" value="Probable inorganic polyphosphate/atp-NAD kinase, domain 2"/>
    <property type="match status" value="1"/>
</dbReference>
<dbReference type="HAMAP" id="MF_00361">
    <property type="entry name" value="NAD_kinase"/>
    <property type="match status" value="1"/>
</dbReference>
<dbReference type="InterPro" id="IPR017438">
    <property type="entry name" value="ATP-NAD_kinase_N"/>
</dbReference>
<dbReference type="InterPro" id="IPR017437">
    <property type="entry name" value="ATP-NAD_kinase_PpnK-typ_C"/>
</dbReference>
<dbReference type="InterPro" id="IPR016064">
    <property type="entry name" value="NAD/diacylglycerol_kinase_sf"/>
</dbReference>
<dbReference type="InterPro" id="IPR002504">
    <property type="entry name" value="NADK"/>
</dbReference>
<dbReference type="NCBIfam" id="NF002306">
    <property type="entry name" value="PRK01231.1"/>
    <property type="match status" value="1"/>
</dbReference>
<dbReference type="PANTHER" id="PTHR20275">
    <property type="entry name" value="NAD KINASE"/>
    <property type="match status" value="1"/>
</dbReference>
<dbReference type="PANTHER" id="PTHR20275:SF0">
    <property type="entry name" value="NAD KINASE"/>
    <property type="match status" value="1"/>
</dbReference>
<dbReference type="Pfam" id="PF01513">
    <property type="entry name" value="NAD_kinase"/>
    <property type="match status" value="1"/>
</dbReference>
<dbReference type="Pfam" id="PF20143">
    <property type="entry name" value="NAD_kinase_C"/>
    <property type="match status" value="1"/>
</dbReference>
<dbReference type="SUPFAM" id="SSF111331">
    <property type="entry name" value="NAD kinase/diacylglycerol kinase-like"/>
    <property type="match status" value="1"/>
</dbReference>
<feature type="chain" id="PRO_1000079486" description="NAD kinase">
    <location>
        <begin position="1"/>
        <end position="299"/>
    </location>
</feature>
<feature type="active site" description="Proton acceptor" evidence="1">
    <location>
        <position position="78"/>
    </location>
</feature>
<feature type="binding site" evidence="1">
    <location>
        <begin position="78"/>
        <end position="79"/>
    </location>
    <ligand>
        <name>NAD(+)</name>
        <dbReference type="ChEBI" id="CHEBI:57540"/>
    </ligand>
</feature>
<feature type="binding site" evidence="1">
    <location>
        <begin position="151"/>
        <end position="152"/>
    </location>
    <ligand>
        <name>NAD(+)</name>
        <dbReference type="ChEBI" id="CHEBI:57540"/>
    </ligand>
</feature>
<feature type="binding site" evidence="1">
    <location>
        <position position="162"/>
    </location>
    <ligand>
        <name>NAD(+)</name>
        <dbReference type="ChEBI" id="CHEBI:57540"/>
    </ligand>
</feature>
<feature type="binding site" evidence="1">
    <location>
        <position position="179"/>
    </location>
    <ligand>
        <name>NAD(+)</name>
        <dbReference type="ChEBI" id="CHEBI:57540"/>
    </ligand>
</feature>
<feature type="binding site" evidence="1">
    <location>
        <position position="181"/>
    </location>
    <ligand>
        <name>NAD(+)</name>
        <dbReference type="ChEBI" id="CHEBI:57540"/>
    </ligand>
</feature>
<feature type="binding site" evidence="1">
    <location>
        <begin position="192"/>
        <end position="197"/>
    </location>
    <ligand>
        <name>NAD(+)</name>
        <dbReference type="ChEBI" id="CHEBI:57540"/>
    </ligand>
</feature>
<feature type="binding site" evidence="1">
    <location>
        <position position="252"/>
    </location>
    <ligand>
        <name>NAD(+)</name>
        <dbReference type="ChEBI" id="CHEBI:57540"/>
    </ligand>
</feature>
<keyword id="KW-0067">ATP-binding</keyword>
<keyword id="KW-0963">Cytoplasm</keyword>
<keyword id="KW-0418">Kinase</keyword>
<keyword id="KW-0520">NAD</keyword>
<keyword id="KW-0521">NADP</keyword>
<keyword id="KW-0547">Nucleotide-binding</keyword>
<keyword id="KW-0808">Transferase</keyword>
<accession>A9KG94</accession>